<sequence>MSSPTSKNVSETNGNKPKKSAKTSSNTKGGSMDTRAELADLIKKKAETSEQLANLERQIYAFEGSYLEDTQLCGNIIRGWERYLTSNKATNSKADKRNRKFKEAERLFSKSSITSMAICNPERASESDSITNEDSSDNQISINQNTTTAHDGTTTIKSTPKDEKDSPSHRNEGSVVSGMVSGSTNSGGNKDLLGTPTSNTKSKLSTNSSATAKKSGHINKKIRHR</sequence>
<evidence type="ECO:0000255" key="1"/>
<evidence type="ECO:0000255" key="2">
    <source>
        <dbReference type="RuleBase" id="RU368022"/>
    </source>
</evidence>
<evidence type="ECO:0000256" key="3">
    <source>
        <dbReference type="SAM" id="MobiDB-lite"/>
    </source>
</evidence>
<evidence type="ECO:0000269" key="4">
    <source>
    </source>
</evidence>
<evidence type="ECO:0000269" key="5">
    <source>
    </source>
</evidence>
<evidence type="ECO:0000305" key="6"/>
<evidence type="ECO:0000312" key="7">
    <source>
        <dbReference type="EMBL" id="AAL48634.1"/>
    </source>
</evidence>
<evidence type="ECO:0000312" key="8">
    <source>
        <dbReference type="FlyBase" id="FBgn0035624"/>
    </source>
</evidence>
<evidence type="ECO:0000312" key="9">
    <source>
        <dbReference type="Proteomes" id="UP000000803"/>
    </source>
</evidence>
<name>EAF6_DROME</name>
<comment type="function">
    <text evidence="4 5">Component of the Enok complex which has a histone H3 acetyltransferase activity (PubMed:27198229). Might be involved in transcriptional activation of selected genes (PubMed:33926075).</text>
</comment>
<comment type="subunit">
    <text evidence="4">Component of the Enok complex composed of at least Br140, enok, Eaf6 and Ing5.</text>
</comment>
<comment type="subcellular location">
    <subcellularLocation>
        <location evidence="4">Nucleus</location>
    </subcellularLocation>
</comment>
<comment type="disruption phenotype">
    <text evidence="5">RNAi-mediated knockdown results in early lethality.</text>
</comment>
<comment type="similarity">
    <text evidence="2">Belongs to the EAF6 family.</text>
</comment>
<feature type="chain" id="PRO_0000456430" description="Chromatin modification-related protein MEAF6">
    <location>
        <begin position="1"/>
        <end position="225"/>
    </location>
</feature>
<feature type="region of interest" description="Disordered" evidence="3">
    <location>
        <begin position="1"/>
        <end position="34"/>
    </location>
</feature>
<feature type="region of interest" description="Disordered" evidence="3">
    <location>
        <begin position="120"/>
        <end position="225"/>
    </location>
</feature>
<feature type="coiled-coil region" evidence="1">
    <location>
        <begin position="30"/>
        <end position="65"/>
    </location>
</feature>
<feature type="compositionally biased region" description="Polar residues" evidence="3">
    <location>
        <begin position="1"/>
        <end position="15"/>
    </location>
</feature>
<feature type="compositionally biased region" description="Polar residues" evidence="3">
    <location>
        <begin position="127"/>
        <end position="158"/>
    </location>
</feature>
<feature type="compositionally biased region" description="Basic and acidic residues" evidence="3">
    <location>
        <begin position="159"/>
        <end position="172"/>
    </location>
</feature>
<feature type="compositionally biased region" description="Low complexity" evidence="3">
    <location>
        <begin position="173"/>
        <end position="189"/>
    </location>
</feature>
<feature type="compositionally biased region" description="Low complexity" evidence="3">
    <location>
        <begin position="197"/>
        <end position="213"/>
    </location>
</feature>
<feature type="compositionally biased region" description="Basic residues" evidence="3">
    <location>
        <begin position="214"/>
        <end position="225"/>
    </location>
</feature>
<protein>
    <recommendedName>
        <fullName evidence="6">Chromatin modification-related protein MEAF6</fullName>
    </recommendedName>
    <alternativeName>
        <fullName evidence="8">Esa1-associated factor 6</fullName>
    </alternativeName>
</protein>
<keyword id="KW-0156">Chromatin regulator</keyword>
<keyword id="KW-0175">Coiled coil</keyword>
<keyword id="KW-0539">Nucleus</keyword>
<keyword id="KW-1185">Reference proteome</keyword>
<keyword id="KW-0804">Transcription</keyword>
<keyword id="KW-0805">Transcription regulation</keyword>
<accession>Q9VRN3</accession>
<gene>
    <name evidence="8" type="primary">Eaf6</name>
    <name evidence="8" type="ORF">CG12756</name>
</gene>
<dbReference type="EMBL" id="AE014296">
    <property type="protein sequence ID" value="AAF50760.1"/>
    <property type="molecule type" value="Genomic_DNA"/>
</dbReference>
<dbReference type="EMBL" id="AY071012">
    <property type="protein sequence ID" value="AAL48634.1"/>
    <property type="molecule type" value="mRNA"/>
</dbReference>
<dbReference type="RefSeq" id="NP_647981.1">
    <property type="nucleotide sequence ID" value="NM_139724.4"/>
</dbReference>
<dbReference type="SMR" id="Q9VRN3"/>
<dbReference type="ComplexPortal" id="CPX-2264">
    <property type="entry name" value="NuA4 histone acetyltransferase complex"/>
</dbReference>
<dbReference type="ComplexPortal" id="CPX-2442">
    <property type="entry name" value="Enok histone acetyltransferase complex"/>
</dbReference>
<dbReference type="FunCoup" id="Q9VRN3">
    <property type="interactions" value="82"/>
</dbReference>
<dbReference type="IntAct" id="Q9VRN3">
    <property type="interactions" value="2"/>
</dbReference>
<dbReference type="STRING" id="7227.FBpp0076832"/>
<dbReference type="PaxDb" id="7227-FBpp0076832"/>
<dbReference type="DNASU" id="38637"/>
<dbReference type="EnsemblMetazoa" id="FBtr0077126">
    <property type="protein sequence ID" value="FBpp0076832"/>
    <property type="gene ID" value="FBgn0035624"/>
</dbReference>
<dbReference type="GeneID" id="38637"/>
<dbReference type="KEGG" id="dme:Dmel_CG12756"/>
<dbReference type="UCSC" id="CG12756-RA">
    <property type="organism name" value="d. melanogaster"/>
</dbReference>
<dbReference type="AGR" id="FB:FBgn0035624"/>
<dbReference type="CTD" id="38637"/>
<dbReference type="FlyBase" id="FBgn0035624">
    <property type="gene designation" value="Eaf6"/>
</dbReference>
<dbReference type="VEuPathDB" id="VectorBase:FBgn0035624"/>
<dbReference type="eggNOG" id="KOG3856">
    <property type="taxonomic scope" value="Eukaryota"/>
</dbReference>
<dbReference type="GeneTree" id="ENSGT00390000015257"/>
<dbReference type="HOGENOM" id="CLU_092163_0_0_1"/>
<dbReference type="InParanoid" id="Q9VRN3"/>
<dbReference type="OMA" id="GGSMDTR"/>
<dbReference type="OrthoDB" id="440324at2759"/>
<dbReference type="Reactome" id="R-DME-6804758">
    <property type="pathway name" value="Regulation of TP53 Activity through Acetylation"/>
</dbReference>
<dbReference type="BioGRID-ORCS" id="38637">
    <property type="hits" value="0 hits in 1 CRISPR screen"/>
</dbReference>
<dbReference type="GenomeRNAi" id="38637"/>
<dbReference type="PRO" id="PR:Q9VRN3"/>
<dbReference type="Proteomes" id="UP000000803">
    <property type="component" value="Chromosome 3L"/>
</dbReference>
<dbReference type="Bgee" id="FBgn0035624">
    <property type="expression patterns" value="Expressed in eye disc (Drosophila) and 58 other cell types or tissues"/>
</dbReference>
<dbReference type="GO" id="GO:0070776">
    <property type="term" value="C:MOZ/MORF histone acetyltransferase complex"/>
    <property type="evidence" value="ECO:0000314"/>
    <property type="project" value="FlyBase"/>
</dbReference>
<dbReference type="GO" id="GO:0035267">
    <property type="term" value="C:NuA4 histone acetyltransferase complex"/>
    <property type="evidence" value="ECO:0000314"/>
    <property type="project" value="FlyBase"/>
</dbReference>
<dbReference type="GO" id="GO:0005634">
    <property type="term" value="C:nucleus"/>
    <property type="evidence" value="ECO:0007669"/>
    <property type="project" value="UniProtKB-SubCell"/>
</dbReference>
<dbReference type="GO" id="GO:0010698">
    <property type="term" value="F:acetyltransferase activator activity"/>
    <property type="evidence" value="ECO:0000314"/>
    <property type="project" value="FlyBase"/>
</dbReference>
<dbReference type="GO" id="GO:0006325">
    <property type="term" value="P:chromatin organization"/>
    <property type="evidence" value="ECO:0007669"/>
    <property type="project" value="UniProtKB-KW"/>
</dbReference>
<dbReference type="InterPro" id="IPR015418">
    <property type="entry name" value="Eaf6"/>
</dbReference>
<dbReference type="PANTHER" id="PTHR13476">
    <property type="entry name" value="CHROMATIN MODIFICATION-RELATED PROTEIN MEAF6"/>
    <property type="match status" value="1"/>
</dbReference>
<dbReference type="Pfam" id="PF09340">
    <property type="entry name" value="NuA4"/>
    <property type="match status" value="1"/>
</dbReference>
<organism evidence="9">
    <name type="scientific">Drosophila melanogaster</name>
    <name type="common">Fruit fly</name>
    <dbReference type="NCBI Taxonomy" id="7227"/>
    <lineage>
        <taxon>Eukaryota</taxon>
        <taxon>Metazoa</taxon>
        <taxon>Ecdysozoa</taxon>
        <taxon>Arthropoda</taxon>
        <taxon>Hexapoda</taxon>
        <taxon>Insecta</taxon>
        <taxon>Pterygota</taxon>
        <taxon>Neoptera</taxon>
        <taxon>Endopterygota</taxon>
        <taxon>Diptera</taxon>
        <taxon>Brachycera</taxon>
        <taxon>Muscomorpha</taxon>
        <taxon>Ephydroidea</taxon>
        <taxon>Drosophilidae</taxon>
        <taxon>Drosophila</taxon>
        <taxon>Sophophora</taxon>
    </lineage>
</organism>
<proteinExistence type="evidence at protein level"/>
<reference evidence="9" key="1">
    <citation type="journal article" date="2000" name="Science">
        <title>The genome sequence of Drosophila melanogaster.</title>
        <authorList>
            <person name="Adams M.D."/>
            <person name="Celniker S.E."/>
            <person name="Holt R.A."/>
            <person name="Evans C.A."/>
            <person name="Gocayne J.D."/>
            <person name="Amanatides P.G."/>
            <person name="Scherer S.E."/>
            <person name="Li P.W."/>
            <person name="Hoskins R.A."/>
            <person name="Galle R.F."/>
            <person name="George R.A."/>
            <person name="Lewis S.E."/>
            <person name="Richards S."/>
            <person name="Ashburner M."/>
            <person name="Henderson S.N."/>
            <person name="Sutton G.G."/>
            <person name="Wortman J.R."/>
            <person name="Yandell M.D."/>
            <person name="Zhang Q."/>
            <person name="Chen L.X."/>
            <person name="Brandon R.C."/>
            <person name="Rogers Y.-H.C."/>
            <person name="Blazej R.G."/>
            <person name="Champe M."/>
            <person name="Pfeiffer B.D."/>
            <person name="Wan K.H."/>
            <person name="Doyle C."/>
            <person name="Baxter E.G."/>
            <person name="Helt G."/>
            <person name="Nelson C.R."/>
            <person name="Miklos G.L.G."/>
            <person name="Abril J.F."/>
            <person name="Agbayani A."/>
            <person name="An H.-J."/>
            <person name="Andrews-Pfannkoch C."/>
            <person name="Baldwin D."/>
            <person name="Ballew R.M."/>
            <person name="Basu A."/>
            <person name="Baxendale J."/>
            <person name="Bayraktaroglu L."/>
            <person name="Beasley E.M."/>
            <person name="Beeson K.Y."/>
            <person name="Benos P.V."/>
            <person name="Berman B.P."/>
            <person name="Bhandari D."/>
            <person name="Bolshakov S."/>
            <person name="Borkova D."/>
            <person name="Botchan M.R."/>
            <person name="Bouck J."/>
            <person name="Brokstein P."/>
            <person name="Brottier P."/>
            <person name="Burtis K.C."/>
            <person name="Busam D.A."/>
            <person name="Butler H."/>
            <person name="Cadieu E."/>
            <person name="Center A."/>
            <person name="Chandra I."/>
            <person name="Cherry J.M."/>
            <person name="Cawley S."/>
            <person name="Dahlke C."/>
            <person name="Davenport L.B."/>
            <person name="Davies P."/>
            <person name="de Pablos B."/>
            <person name="Delcher A."/>
            <person name="Deng Z."/>
            <person name="Mays A.D."/>
            <person name="Dew I."/>
            <person name="Dietz S.M."/>
            <person name="Dodson K."/>
            <person name="Doup L.E."/>
            <person name="Downes M."/>
            <person name="Dugan-Rocha S."/>
            <person name="Dunkov B.C."/>
            <person name="Dunn P."/>
            <person name="Durbin K.J."/>
            <person name="Evangelista C.C."/>
            <person name="Ferraz C."/>
            <person name="Ferriera S."/>
            <person name="Fleischmann W."/>
            <person name="Fosler C."/>
            <person name="Gabrielian A.E."/>
            <person name="Garg N.S."/>
            <person name="Gelbart W.M."/>
            <person name="Glasser K."/>
            <person name="Glodek A."/>
            <person name="Gong F."/>
            <person name="Gorrell J.H."/>
            <person name="Gu Z."/>
            <person name="Guan P."/>
            <person name="Harris M."/>
            <person name="Harris N.L."/>
            <person name="Harvey D.A."/>
            <person name="Heiman T.J."/>
            <person name="Hernandez J.R."/>
            <person name="Houck J."/>
            <person name="Hostin D."/>
            <person name="Houston K.A."/>
            <person name="Howland T.J."/>
            <person name="Wei M.-H."/>
            <person name="Ibegwam C."/>
            <person name="Jalali M."/>
            <person name="Kalush F."/>
            <person name="Karpen G.H."/>
            <person name="Ke Z."/>
            <person name="Kennison J.A."/>
            <person name="Ketchum K.A."/>
            <person name="Kimmel B.E."/>
            <person name="Kodira C.D."/>
            <person name="Kraft C.L."/>
            <person name="Kravitz S."/>
            <person name="Kulp D."/>
            <person name="Lai Z."/>
            <person name="Lasko P."/>
            <person name="Lei Y."/>
            <person name="Levitsky A.A."/>
            <person name="Li J.H."/>
            <person name="Li Z."/>
            <person name="Liang Y."/>
            <person name="Lin X."/>
            <person name="Liu X."/>
            <person name="Mattei B."/>
            <person name="McIntosh T.C."/>
            <person name="McLeod M.P."/>
            <person name="McPherson D."/>
            <person name="Merkulov G."/>
            <person name="Milshina N.V."/>
            <person name="Mobarry C."/>
            <person name="Morris J."/>
            <person name="Moshrefi A."/>
            <person name="Mount S.M."/>
            <person name="Moy M."/>
            <person name="Murphy B."/>
            <person name="Murphy L."/>
            <person name="Muzny D.M."/>
            <person name="Nelson D.L."/>
            <person name="Nelson D.R."/>
            <person name="Nelson K.A."/>
            <person name="Nixon K."/>
            <person name="Nusskern D.R."/>
            <person name="Pacleb J.M."/>
            <person name="Palazzolo M."/>
            <person name="Pittman G.S."/>
            <person name="Pan S."/>
            <person name="Pollard J."/>
            <person name="Puri V."/>
            <person name="Reese M.G."/>
            <person name="Reinert K."/>
            <person name="Remington K."/>
            <person name="Saunders R.D.C."/>
            <person name="Scheeler F."/>
            <person name="Shen H."/>
            <person name="Shue B.C."/>
            <person name="Siden-Kiamos I."/>
            <person name="Simpson M."/>
            <person name="Skupski M.P."/>
            <person name="Smith T.J."/>
            <person name="Spier E."/>
            <person name="Spradling A.C."/>
            <person name="Stapleton M."/>
            <person name="Strong R."/>
            <person name="Sun E."/>
            <person name="Svirskas R."/>
            <person name="Tector C."/>
            <person name="Turner R."/>
            <person name="Venter E."/>
            <person name="Wang A.H."/>
            <person name="Wang X."/>
            <person name="Wang Z.-Y."/>
            <person name="Wassarman D.A."/>
            <person name="Weinstock G.M."/>
            <person name="Weissenbach J."/>
            <person name="Williams S.M."/>
            <person name="Woodage T."/>
            <person name="Worley K.C."/>
            <person name="Wu D."/>
            <person name="Yang S."/>
            <person name="Yao Q.A."/>
            <person name="Ye J."/>
            <person name="Yeh R.-F."/>
            <person name="Zaveri J.S."/>
            <person name="Zhan M."/>
            <person name="Zhang G."/>
            <person name="Zhao Q."/>
            <person name="Zheng L."/>
            <person name="Zheng X.H."/>
            <person name="Zhong F.N."/>
            <person name="Zhong W."/>
            <person name="Zhou X."/>
            <person name="Zhu S.C."/>
            <person name="Zhu X."/>
            <person name="Smith H.O."/>
            <person name="Gibbs R.A."/>
            <person name="Myers E.W."/>
            <person name="Rubin G.M."/>
            <person name="Venter J.C."/>
        </authorList>
    </citation>
    <scope>NUCLEOTIDE SEQUENCE [LARGE SCALE GENOMIC DNA]</scope>
    <source>
        <strain evidence="9">Berkeley</strain>
    </source>
</reference>
<reference evidence="9" key="2">
    <citation type="journal article" date="2002" name="Genome Biol.">
        <title>Annotation of the Drosophila melanogaster euchromatic genome: a systematic review.</title>
        <authorList>
            <person name="Misra S."/>
            <person name="Crosby M.A."/>
            <person name="Mungall C.J."/>
            <person name="Matthews B.B."/>
            <person name="Campbell K.S."/>
            <person name="Hradecky P."/>
            <person name="Huang Y."/>
            <person name="Kaminker J.S."/>
            <person name="Millburn G.H."/>
            <person name="Prochnik S.E."/>
            <person name="Smith C.D."/>
            <person name="Tupy J.L."/>
            <person name="Whitfield E.J."/>
            <person name="Bayraktaroglu L."/>
            <person name="Berman B.P."/>
            <person name="Bettencourt B.R."/>
            <person name="Celniker S.E."/>
            <person name="de Grey A.D.N.J."/>
            <person name="Drysdale R.A."/>
            <person name="Harris N.L."/>
            <person name="Richter J."/>
            <person name="Russo S."/>
            <person name="Schroeder A.J."/>
            <person name="Shu S.Q."/>
            <person name="Stapleton M."/>
            <person name="Yamada C."/>
            <person name="Ashburner M."/>
            <person name="Gelbart W.M."/>
            <person name="Rubin G.M."/>
            <person name="Lewis S.E."/>
        </authorList>
    </citation>
    <scope>GENOME REANNOTATION</scope>
    <source>
        <strain evidence="9">Berkeley</strain>
    </source>
</reference>
<reference evidence="7" key="3">
    <citation type="journal article" date="2002" name="Genome Biol.">
        <title>A Drosophila full-length cDNA resource.</title>
        <authorList>
            <person name="Stapleton M."/>
            <person name="Carlson J.W."/>
            <person name="Brokstein P."/>
            <person name="Yu C."/>
            <person name="Champe M."/>
            <person name="George R.A."/>
            <person name="Guarin H."/>
            <person name="Kronmiller B."/>
            <person name="Pacleb J.M."/>
            <person name="Park S."/>
            <person name="Wan K.H."/>
            <person name="Rubin G.M."/>
            <person name="Celniker S.E."/>
        </authorList>
    </citation>
    <scope>NUCLEOTIDE SEQUENCE [LARGE SCALE MRNA]</scope>
    <source>
        <strain evidence="7">Berkeley</strain>
        <tissue evidence="7">Embryo</tissue>
    </source>
</reference>
<reference evidence="6" key="4">
    <citation type="journal article" date="2016" name="Genes Dev.">
        <title>The Enok acetyltransferase complex interacts with Elg1 and negatively regulates PCNA unloading to promote the G1/S transition.</title>
        <authorList>
            <person name="Huang F."/>
            <person name="Saraf A."/>
            <person name="Florens L."/>
            <person name="Kusch T."/>
            <person name="Swanson S.K."/>
            <person name="Szerszen L.T."/>
            <person name="Li G."/>
            <person name="Dutta A."/>
            <person name="Washburn M.P."/>
            <person name="Abmayr S.M."/>
            <person name="Workman J.L."/>
        </authorList>
    </citation>
    <scope>FUNCTION</scope>
    <scope>IDENTIFICATION IN THE ENOK COMPLEX</scope>
    <scope>SUBCELLULAR LOCATION</scope>
</reference>
<reference evidence="6" key="5">
    <citation type="journal article" date="2021" name="Int. J. Mol. Sci.">
        <title>In Vivo Silencing of Genes Coding for dTip60 Chromatin Remodeling Complex Subunits Affects Polytene Chromosome Organization and Proper Development in Drosophila melanogaster.</title>
        <authorList>
            <person name="Prozzillo Y."/>
            <person name="Cuticone S."/>
            <person name="Ferreri D."/>
            <person name="Fattorini G."/>
            <person name="Messina G."/>
            <person name="Dimitri P."/>
        </authorList>
    </citation>
    <scope>FUNCTION</scope>
    <scope>DISRUPTION PHENOTYPE</scope>
</reference>